<accession>Q3MI05</accession>
<name>PPGB_BOVIN</name>
<keyword id="KW-0121">Carboxypeptidase</keyword>
<keyword id="KW-1015">Disulfide bond</keyword>
<keyword id="KW-0325">Glycoprotein</keyword>
<keyword id="KW-0378">Hydrolase</keyword>
<keyword id="KW-0458">Lysosome</keyword>
<keyword id="KW-0645">Protease</keyword>
<keyword id="KW-1185">Reference proteome</keyword>
<keyword id="KW-0732">Signal</keyword>
<keyword id="KW-0865">Zymogen</keyword>
<evidence type="ECO:0000250" key="1"/>
<evidence type="ECO:0000255" key="2"/>
<evidence type="ECO:0000255" key="3">
    <source>
        <dbReference type="PROSITE-ProRule" id="PRU10074"/>
    </source>
</evidence>
<evidence type="ECO:0000255" key="4">
    <source>
        <dbReference type="PROSITE-ProRule" id="PRU10075"/>
    </source>
</evidence>
<evidence type="ECO:0000305" key="5"/>
<comment type="function">
    <text evidence="1">Protective protein appears to be essential for both the activity of beta-galactosidase and neuraminidase, it associates with these enzymes and exerts a protective function necessary for their stability and activity. This protein is also a carboxypeptidase and can deamidate tachykinins (By similarity).</text>
</comment>
<comment type="catalytic activity">
    <reaction evidence="3 4">
        <text>Release of a C-terminal amino acid with broad specificity.</text>
        <dbReference type="EC" id="3.4.16.5"/>
    </reaction>
</comment>
<comment type="subunit">
    <text evidence="1">Heterodimer of a 32 kDa chain and a 20 kDa chain; disulfide-linked.</text>
</comment>
<comment type="subcellular location">
    <subcellularLocation>
        <location evidence="1">Lysosome</location>
    </subcellularLocation>
</comment>
<comment type="similarity">
    <text evidence="5">Belongs to the peptidase S10 family.</text>
</comment>
<reference key="1">
    <citation type="submission" date="2005-09" db="EMBL/GenBank/DDBJ databases">
        <authorList>
            <consortium name="NIH - Mammalian Gene Collection (MGC) project"/>
        </authorList>
    </citation>
    <scope>NUCLEOTIDE SEQUENCE [LARGE SCALE MRNA]</scope>
    <source>
        <strain>Hereford</strain>
        <tissue>Uterus</tissue>
    </source>
</reference>
<gene>
    <name type="primary">CTSA</name>
    <name type="synonym">PPGB</name>
</gene>
<feature type="signal peptide" evidence="1">
    <location>
        <begin position="1"/>
        <end position="27"/>
    </location>
</feature>
<feature type="chain" id="PRO_0000236219" description="Lysosomal protective protein">
    <location>
        <begin position="28"/>
        <end position="479"/>
    </location>
</feature>
<feature type="chain" id="PRO_0000236220" description="Lysosomal protective protein 32 kDa chain" evidence="1">
    <location>
        <begin position="28"/>
        <end position="325"/>
    </location>
</feature>
<feature type="chain" id="PRO_0000236221" description="Lysosomal protective protein 20 kDa chain" evidence="1">
    <location>
        <begin position="326"/>
        <end position="479"/>
    </location>
</feature>
<feature type="active site" evidence="1">
    <location>
        <position position="177"/>
    </location>
</feature>
<feature type="active site" evidence="1">
    <location>
        <position position="399"/>
    </location>
</feature>
<feature type="active site" evidence="1">
    <location>
        <position position="456"/>
    </location>
</feature>
<feature type="glycosylation site" description="N-linked (GlcNAc...) asparagine" evidence="2">
    <location>
        <position position="144"/>
    </location>
</feature>
<feature type="glycosylation site" description="N-linked (GlcNAc...) asparagine" evidence="2">
    <location>
        <position position="332"/>
    </location>
</feature>
<feature type="disulfide bond" evidence="1">
    <location>
        <begin position="87"/>
        <end position="361"/>
    </location>
</feature>
<feature type="disulfide bond" evidence="1">
    <location>
        <begin position="239"/>
        <end position="255"/>
    </location>
</feature>
<feature type="disulfide bond" evidence="1">
    <location>
        <begin position="240"/>
        <end position="245"/>
    </location>
</feature>
<feature type="disulfide bond" evidence="1">
    <location>
        <begin position="280"/>
        <end position="330"/>
    </location>
</feature>
<sequence length="479" mass="53980">MFRAALWPPVLLLLQLLLLACAPGGEGAHDQDEIRFLPGLAKQPSFRQYSGYLKGSGSKRLHYWFVESQKDPKSSPVVLWLNGGPGCSSLDGLLTEHGPFLIQPDGVTLEYNPYSWNLIANVLYLESPAGVGFSYSDDKSYATNDTEVAQSNFEALKDFFCLFPEYKGNELFLTGESYAGIYIPTLAVLVMQDPSMNLQGLAVGNGLSSYEQNDNSLVYFAYYHGLLGNRLWSSLQTHCCSQNQCNFHDNKEPECVANLQEVSHIVASSGLNIYNLYAPCAGGVPSHVRHEKDTVVVQDLGNIFTRLPLKRVWHQTLLRSGEKVHLDPPCTNTTAASNYLNDPHVRKALHIPEQLPRWDLCNFLVNIQYRRLYQSMCSQYLKLLSAQKYRILLYNGDVDMACNFMGDEWFVDSLNQKMEVQRRPWLVDYGESGEQIAGFVKEFSHIAFLTIKGAGHMVPTDKPQAALTMFSRFLNRQPY</sequence>
<proteinExistence type="evidence at transcript level"/>
<protein>
    <recommendedName>
        <fullName>Lysosomal protective protein</fullName>
        <ecNumber>3.4.16.5</ecNumber>
    </recommendedName>
    <alternativeName>
        <fullName>Cathepsin A</fullName>
    </alternativeName>
    <component>
        <recommendedName>
            <fullName>Lysosomal protective protein 32 kDa chain</fullName>
        </recommendedName>
    </component>
    <component>
        <recommendedName>
            <fullName>Lysosomal protective protein 20 kDa chain</fullName>
        </recommendedName>
    </component>
</protein>
<organism>
    <name type="scientific">Bos taurus</name>
    <name type="common">Bovine</name>
    <dbReference type="NCBI Taxonomy" id="9913"/>
    <lineage>
        <taxon>Eukaryota</taxon>
        <taxon>Metazoa</taxon>
        <taxon>Chordata</taxon>
        <taxon>Craniata</taxon>
        <taxon>Vertebrata</taxon>
        <taxon>Euteleostomi</taxon>
        <taxon>Mammalia</taxon>
        <taxon>Eutheria</taxon>
        <taxon>Laurasiatheria</taxon>
        <taxon>Artiodactyla</taxon>
        <taxon>Ruminantia</taxon>
        <taxon>Pecora</taxon>
        <taxon>Bovidae</taxon>
        <taxon>Bovinae</taxon>
        <taxon>Bos</taxon>
    </lineage>
</organism>
<dbReference type="EC" id="3.4.16.5"/>
<dbReference type="EMBL" id="BC104495">
    <property type="protein sequence ID" value="AAI04496.1"/>
    <property type="molecule type" value="mRNA"/>
</dbReference>
<dbReference type="RefSeq" id="NP_001030403.1">
    <property type="nucleotide sequence ID" value="NM_001035326.1"/>
</dbReference>
<dbReference type="SMR" id="Q3MI05"/>
<dbReference type="FunCoup" id="Q3MI05">
    <property type="interactions" value="1264"/>
</dbReference>
<dbReference type="STRING" id="9913.ENSBTAP00000039003"/>
<dbReference type="ESTHER" id="bovin-ppgb">
    <property type="family name" value="Carboxypeptidase_S10"/>
</dbReference>
<dbReference type="MEROPS" id="S10.002"/>
<dbReference type="GlyCosmos" id="Q3MI05">
    <property type="glycosylation" value="2 sites, No reported glycans"/>
</dbReference>
<dbReference type="GlyGen" id="Q3MI05">
    <property type="glycosylation" value="2 sites"/>
</dbReference>
<dbReference type="PaxDb" id="9913-ENSBTAP00000039003"/>
<dbReference type="GeneID" id="518169"/>
<dbReference type="KEGG" id="bta:518169"/>
<dbReference type="CTD" id="5476"/>
<dbReference type="eggNOG" id="KOG1282">
    <property type="taxonomic scope" value="Eukaryota"/>
</dbReference>
<dbReference type="HOGENOM" id="CLU_008523_13_3_1"/>
<dbReference type="InParanoid" id="Q3MI05"/>
<dbReference type="OrthoDB" id="443318at2759"/>
<dbReference type="TreeFam" id="TF323769"/>
<dbReference type="Proteomes" id="UP000009136">
    <property type="component" value="Unplaced"/>
</dbReference>
<dbReference type="GO" id="GO:0005764">
    <property type="term" value="C:lysosome"/>
    <property type="evidence" value="ECO:0007669"/>
    <property type="project" value="UniProtKB-SubCell"/>
</dbReference>
<dbReference type="GO" id="GO:0004185">
    <property type="term" value="F:serine-type carboxypeptidase activity"/>
    <property type="evidence" value="ECO:0000318"/>
    <property type="project" value="GO_Central"/>
</dbReference>
<dbReference type="GO" id="GO:0006508">
    <property type="term" value="P:proteolysis"/>
    <property type="evidence" value="ECO:0007669"/>
    <property type="project" value="UniProtKB-KW"/>
</dbReference>
<dbReference type="FunFam" id="3.40.50.1820:FF:000335">
    <property type="entry name" value="Carboxypeptidase"/>
    <property type="match status" value="1"/>
</dbReference>
<dbReference type="Gene3D" id="3.40.50.1820">
    <property type="entry name" value="alpha/beta hydrolase"/>
    <property type="match status" value="1"/>
</dbReference>
<dbReference type="InterPro" id="IPR029058">
    <property type="entry name" value="AB_hydrolase_fold"/>
</dbReference>
<dbReference type="InterPro" id="IPR001563">
    <property type="entry name" value="Peptidase_S10"/>
</dbReference>
<dbReference type="InterPro" id="IPR033124">
    <property type="entry name" value="Ser_caboxypep_his_AS"/>
</dbReference>
<dbReference type="InterPro" id="IPR018202">
    <property type="entry name" value="Ser_caboxypep_ser_AS"/>
</dbReference>
<dbReference type="PANTHER" id="PTHR11802:SF502">
    <property type="entry name" value="LYSOSOMAL PROTECTIVE PROTEIN"/>
    <property type="match status" value="1"/>
</dbReference>
<dbReference type="PANTHER" id="PTHR11802">
    <property type="entry name" value="SERINE PROTEASE FAMILY S10 SERINE CARBOXYPEPTIDASE"/>
    <property type="match status" value="1"/>
</dbReference>
<dbReference type="Pfam" id="PF00450">
    <property type="entry name" value="Peptidase_S10"/>
    <property type="match status" value="1"/>
</dbReference>
<dbReference type="PRINTS" id="PR00724">
    <property type="entry name" value="CRBOXYPTASEC"/>
</dbReference>
<dbReference type="SUPFAM" id="SSF53474">
    <property type="entry name" value="alpha/beta-Hydrolases"/>
    <property type="match status" value="1"/>
</dbReference>
<dbReference type="PROSITE" id="PS00560">
    <property type="entry name" value="CARBOXYPEPT_SER_HIS"/>
    <property type="match status" value="1"/>
</dbReference>
<dbReference type="PROSITE" id="PS00131">
    <property type="entry name" value="CARBOXYPEPT_SER_SER"/>
    <property type="match status" value="1"/>
</dbReference>